<feature type="chain" id="PRO_0000408397" description="Protein B6">
    <location>
        <begin position="1"/>
        <end position="79"/>
    </location>
</feature>
<proteinExistence type="predicted"/>
<gene>
    <name type="primary">B6</name>
</gene>
<sequence>MWYELTSAKTNESLPRSTRMYSGGNLKNAQFSLLSSRELVNSYFDVNSGGGLDGVLSINRSSFIFCTTEVILGIGVRIR</sequence>
<protein>
    <recommendedName>
        <fullName>Protein B6</fullName>
    </recommendedName>
</protein>
<accession>Q96895</accession>
<organism>
    <name type="scientific">Human herpesvirus 6B (strain Z29)</name>
    <name type="common">HHV-6 variant B</name>
    <name type="synonym">Human B lymphotropic virus</name>
    <dbReference type="NCBI Taxonomy" id="36351"/>
    <lineage>
        <taxon>Viruses</taxon>
        <taxon>Duplodnaviria</taxon>
        <taxon>Heunggongvirae</taxon>
        <taxon>Peploviricota</taxon>
        <taxon>Herviviricetes</taxon>
        <taxon>Herpesvirales</taxon>
        <taxon>Orthoherpesviridae</taxon>
        <taxon>Betaherpesvirinae</taxon>
        <taxon>Roseolovirus</taxon>
        <taxon>Roseolovirus humanbeta6b</taxon>
        <taxon>Human herpesvirus 6B</taxon>
    </lineage>
</organism>
<reference key="1">
    <citation type="journal article" date="1996" name="Arch. Virol.">
        <title>Restriction endonuclease mapping and molecular cloning of the human herpesvirus 6 variant B strain Z29 genome.</title>
        <authorList>
            <person name="Lindquester G.J."/>
            <person name="Inoue N."/>
            <person name="Allen R.D."/>
            <person name="Castelli J.W."/>
            <person name="Stamey F.R."/>
            <person name="Dambaugh T.R."/>
            <person name="O'Brian J.J."/>
            <person name="Danovich R.M."/>
            <person name="Frenkel N."/>
            <person name="Pellett P.E."/>
        </authorList>
    </citation>
    <scope>NUCLEOTIDE SEQUENCE [LARGE SCALE GENOMIC DNA]</scope>
</reference>
<reference key="2">
    <citation type="journal article" date="1999" name="J. Virol.">
        <title>Human herpesvirus 6B genome sequence: coding content and comparison with human herpesvirus 6A.</title>
        <authorList>
            <person name="Dominguez G."/>
            <person name="Dambaugh T.R."/>
            <person name="Stamey F.R."/>
            <person name="Dewhurst S."/>
            <person name="Inoue N."/>
            <person name="Pellett P.E."/>
        </authorList>
    </citation>
    <scope>NUCLEOTIDE SEQUENCE [LARGE SCALE GENOMIC DNA]</scope>
</reference>
<organismHost>
    <name type="scientific">Homo sapiens</name>
    <name type="common">Human</name>
    <dbReference type="NCBI Taxonomy" id="9606"/>
</organismHost>
<dbReference type="EMBL" id="AF157706">
    <property type="protein sequence ID" value="AAB06361.1"/>
    <property type="molecule type" value="Genomic_DNA"/>
</dbReference>
<dbReference type="RefSeq" id="NP_050257.1">
    <property type="nucleotide sequence ID" value="NC_000898.1"/>
</dbReference>
<dbReference type="DNASU" id="1497078"/>
<dbReference type="GeneID" id="1497078"/>
<dbReference type="KEGG" id="vg:1497078"/>
<dbReference type="Proteomes" id="UP000006930">
    <property type="component" value="Segment"/>
</dbReference>
<name>B6_HHV6Z</name>
<keyword id="KW-1185">Reference proteome</keyword>